<sequence>MLEKVRFDLPQDEIPTEWYNILPDLPEPLPEPQDPTGKSFEILKQVLPSKVLELEFSKERYIKIPEEVLQRYLQVGRPTPIIRARKLEEYLGGYIKIYMKMESHTYTGSHKINSALAHVYFAKLDNAKFVSTETGAGQWGSAVALASALFNIQAHIFMVRTSYYAKPYRRYLMQMYNAQVHPSPSEFTRYGREVLAKDPNTPGSLGIAISEAVYYALENGGKYVVGSVVNSDILFKTIAGMEAKKQMEMIGEDPDYIIGVVGGGSNYAALAYPFLGEELRKGKVRRKYIASGAIEVPKMTKGVYKYDYPDTAKILPMLKMYTIGSDFIPAPVYAGGLRYHAVAPTLSLLMYKGIVQARDYSQEEAFSWAKLFSQIEGWVPAPETSHALPILKEIVEEAKKSGEKKTVLISFSGHGLLDLANYADVLGFNKE</sequence>
<evidence type="ECO:0000250" key="1"/>
<evidence type="ECO:0000305" key="2"/>
<keyword id="KW-0028">Amino-acid biosynthesis</keyword>
<keyword id="KW-0057">Aromatic amino acid biosynthesis</keyword>
<keyword id="KW-0456">Lyase</keyword>
<keyword id="KW-0663">Pyridoxal phosphate</keyword>
<keyword id="KW-1185">Reference proteome</keyword>
<keyword id="KW-0822">Tryptophan biosynthesis</keyword>
<gene>
    <name type="primary">trpB2</name>
    <name type="ordered locus">STK_15670</name>
</gene>
<proteinExistence type="inferred from homology"/>
<dbReference type="EC" id="4.2.1.20"/>
<dbReference type="EMBL" id="BA000023">
    <property type="protein sequence ID" value="BAB66642.1"/>
    <property type="molecule type" value="Genomic_DNA"/>
</dbReference>
<dbReference type="RefSeq" id="WP_010979620.1">
    <property type="nucleotide sequence ID" value="NC_003106.2"/>
</dbReference>
<dbReference type="SMR" id="Q970N1"/>
<dbReference type="STRING" id="273063.STK_15670"/>
<dbReference type="GeneID" id="1459606"/>
<dbReference type="KEGG" id="sto:STK_15670"/>
<dbReference type="PATRIC" id="fig|273063.9.peg.1785"/>
<dbReference type="eggNOG" id="arCOG01432">
    <property type="taxonomic scope" value="Archaea"/>
</dbReference>
<dbReference type="OrthoDB" id="371827at2157"/>
<dbReference type="UniPathway" id="UPA00035">
    <property type="reaction ID" value="UER00044"/>
</dbReference>
<dbReference type="Proteomes" id="UP000001015">
    <property type="component" value="Chromosome"/>
</dbReference>
<dbReference type="GO" id="GO:0005737">
    <property type="term" value="C:cytoplasm"/>
    <property type="evidence" value="ECO:0007669"/>
    <property type="project" value="TreeGrafter"/>
</dbReference>
<dbReference type="GO" id="GO:0052684">
    <property type="term" value="F:L-serine hydro-lyase (adding indole, L-tryptophan-forming) activity"/>
    <property type="evidence" value="ECO:0007669"/>
    <property type="project" value="TreeGrafter"/>
</dbReference>
<dbReference type="GO" id="GO:0030170">
    <property type="term" value="F:pyridoxal phosphate binding"/>
    <property type="evidence" value="ECO:0007669"/>
    <property type="project" value="InterPro"/>
</dbReference>
<dbReference type="GO" id="GO:0004834">
    <property type="term" value="F:tryptophan synthase activity"/>
    <property type="evidence" value="ECO:0007669"/>
    <property type="project" value="UniProtKB-UniRule"/>
</dbReference>
<dbReference type="Gene3D" id="3.40.50.1100">
    <property type="match status" value="2"/>
</dbReference>
<dbReference type="HAMAP" id="MF_00133">
    <property type="entry name" value="Trp_synth_beta"/>
    <property type="match status" value="1"/>
</dbReference>
<dbReference type="InterPro" id="IPR006316">
    <property type="entry name" value="Trp_synth_b-like"/>
</dbReference>
<dbReference type="InterPro" id="IPR006653">
    <property type="entry name" value="Trp_synth_b_CS"/>
</dbReference>
<dbReference type="InterPro" id="IPR023026">
    <property type="entry name" value="Trp_synth_beta/beta-like"/>
</dbReference>
<dbReference type="InterPro" id="IPR001926">
    <property type="entry name" value="TrpB-like_PALP"/>
</dbReference>
<dbReference type="InterPro" id="IPR036052">
    <property type="entry name" value="TrpB-like_PALP_sf"/>
</dbReference>
<dbReference type="NCBIfam" id="NF009057">
    <property type="entry name" value="PRK12391.1"/>
    <property type="match status" value="1"/>
</dbReference>
<dbReference type="NCBIfam" id="TIGR01415">
    <property type="entry name" value="trpB_rel"/>
    <property type="match status" value="1"/>
</dbReference>
<dbReference type="PANTHER" id="PTHR48077:SF6">
    <property type="entry name" value="TRYPTOPHAN SYNTHASE"/>
    <property type="match status" value="1"/>
</dbReference>
<dbReference type="PANTHER" id="PTHR48077">
    <property type="entry name" value="TRYPTOPHAN SYNTHASE-RELATED"/>
    <property type="match status" value="1"/>
</dbReference>
<dbReference type="Pfam" id="PF00291">
    <property type="entry name" value="PALP"/>
    <property type="match status" value="1"/>
</dbReference>
<dbReference type="PIRSF" id="PIRSF001413">
    <property type="entry name" value="Trp_syn_beta"/>
    <property type="match status" value="1"/>
</dbReference>
<dbReference type="PIRSF" id="PIRSF500824">
    <property type="entry name" value="TrpB_prok"/>
    <property type="match status" value="1"/>
</dbReference>
<dbReference type="SUPFAM" id="SSF53686">
    <property type="entry name" value="Tryptophan synthase beta subunit-like PLP-dependent enzymes"/>
    <property type="match status" value="1"/>
</dbReference>
<dbReference type="PROSITE" id="PS00168">
    <property type="entry name" value="TRP_SYNTHASE_BETA"/>
    <property type="match status" value="1"/>
</dbReference>
<feature type="chain" id="PRO_0000099058" description="Tryptophan synthase beta chain 2">
    <location>
        <begin position="1"/>
        <end position="431"/>
    </location>
</feature>
<feature type="modified residue" description="N6-(pyridoxal phosphate)lysine" evidence="1">
    <location>
        <position position="111"/>
    </location>
</feature>
<protein>
    <recommendedName>
        <fullName>Tryptophan synthase beta chain 2</fullName>
        <ecNumber>4.2.1.20</ecNumber>
    </recommendedName>
</protein>
<accession>Q970N1</accession>
<name>TRPB2_SULTO</name>
<organism>
    <name type="scientific">Sulfurisphaera tokodaii (strain DSM 16993 / JCM 10545 / NBRC 100140 / 7)</name>
    <name type="common">Sulfolobus tokodaii</name>
    <dbReference type="NCBI Taxonomy" id="273063"/>
    <lineage>
        <taxon>Archaea</taxon>
        <taxon>Thermoproteota</taxon>
        <taxon>Thermoprotei</taxon>
        <taxon>Sulfolobales</taxon>
        <taxon>Sulfolobaceae</taxon>
        <taxon>Sulfurisphaera</taxon>
    </lineage>
</organism>
<comment type="function">
    <text evidence="1">The beta subunit is responsible for the synthesis of L-tryptophan from indole and L-serine.</text>
</comment>
<comment type="catalytic activity">
    <reaction>
        <text>(1S,2R)-1-C-(indol-3-yl)glycerol 3-phosphate + L-serine = D-glyceraldehyde 3-phosphate + L-tryptophan + H2O</text>
        <dbReference type="Rhea" id="RHEA:10532"/>
        <dbReference type="ChEBI" id="CHEBI:15377"/>
        <dbReference type="ChEBI" id="CHEBI:33384"/>
        <dbReference type="ChEBI" id="CHEBI:57912"/>
        <dbReference type="ChEBI" id="CHEBI:58866"/>
        <dbReference type="ChEBI" id="CHEBI:59776"/>
        <dbReference type="EC" id="4.2.1.20"/>
    </reaction>
</comment>
<comment type="cofactor">
    <cofactor evidence="1">
        <name>pyridoxal 5'-phosphate</name>
        <dbReference type="ChEBI" id="CHEBI:597326"/>
    </cofactor>
</comment>
<comment type="pathway">
    <text>Amino-acid biosynthesis; L-tryptophan biosynthesis; L-tryptophan from chorismate: step 5/5.</text>
</comment>
<comment type="subunit">
    <text evidence="1">Tetramer of two alpha and two beta chains.</text>
</comment>
<comment type="similarity">
    <text evidence="2">Belongs to the TrpB family.</text>
</comment>
<reference key="1">
    <citation type="journal article" date="2001" name="DNA Res.">
        <title>Complete genome sequence of an aerobic thermoacidophilic Crenarchaeon, Sulfolobus tokodaii strain7.</title>
        <authorList>
            <person name="Kawarabayasi Y."/>
            <person name="Hino Y."/>
            <person name="Horikawa H."/>
            <person name="Jin-no K."/>
            <person name="Takahashi M."/>
            <person name="Sekine M."/>
            <person name="Baba S."/>
            <person name="Ankai A."/>
            <person name="Kosugi H."/>
            <person name="Hosoyama A."/>
            <person name="Fukui S."/>
            <person name="Nagai Y."/>
            <person name="Nishijima K."/>
            <person name="Otsuka R."/>
            <person name="Nakazawa H."/>
            <person name="Takamiya M."/>
            <person name="Kato Y."/>
            <person name="Yoshizawa T."/>
            <person name="Tanaka T."/>
            <person name="Kudoh Y."/>
            <person name="Yamazaki J."/>
            <person name="Kushida N."/>
            <person name="Oguchi A."/>
            <person name="Aoki K."/>
            <person name="Masuda S."/>
            <person name="Yanagii M."/>
            <person name="Nishimura M."/>
            <person name="Yamagishi A."/>
            <person name="Oshima T."/>
            <person name="Kikuchi H."/>
        </authorList>
    </citation>
    <scope>NUCLEOTIDE SEQUENCE [LARGE SCALE GENOMIC DNA]</scope>
    <source>
        <strain>DSM 16993 / JCM 10545 / NBRC 100140 / 7</strain>
    </source>
</reference>